<comment type="function">
    <text evidence="1">Involved in the gluconeogenesis. Catalyzes stereospecifically the conversion of dihydroxyacetone phosphate (DHAP) to D-glyceraldehyde-3-phosphate (G3P).</text>
</comment>
<comment type="catalytic activity">
    <reaction evidence="1">
        <text>D-glyceraldehyde 3-phosphate = dihydroxyacetone phosphate</text>
        <dbReference type="Rhea" id="RHEA:18585"/>
        <dbReference type="ChEBI" id="CHEBI:57642"/>
        <dbReference type="ChEBI" id="CHEBI:59776"/>
        <dbReference type="EC" id="5.3.1.1"/>
    </reaction>
</comment>
<comment type="pathway">
    <text evidence="1">Carbohydrate biosynthesis; gluconeogenesis.</text>
</comment>
<comment type="pathway">
    <text evidence="1">Carbohydrate degradation; glycolysis; D-glyceraldehyde 3-phosphate from glycerone phosphate: step 1/1.</text>
</comment>
<comment type="subunit">
    <text evidence="1">Homodimer.</text>
</comment>
<comment type="subcellular location">
    <subcellularLocation>
        <location evidence="1">Cytoplasm</location>
    </subcellularLocation>
</comment>
<comment type="similarity">
    <text evidence="1">Belongs to the triosephosphate isomerase family.</text>
</comment>
<dbReference type="EC" id="5.3.1.1" evidence="1"/>
<dbReference type="EMBL" id="CP000828">
    <property type="protein sequence ID" value="ABW29368.1"/>
    <property type="molecule type" value="Genomic_DNA"/>
</dbReference>
<dbReference type="RefSeq" id="WP_012164693.1">
    <property type="nucleotide sequence ID" value="NC_009925.1"/>
</dbReference>
<dbReference type="SMR" id="B0CEX1"/>
<dbReference type="STRING" id="329726.AM1_4389"/>
<dbReference type="KEGG" id="amr:AM1_4389"/>
<dbReference type="eggNOG" id="COG0149">
    <property type="taxonomic scope" value="Bacteria"/>
</dbReference>
<dbReference type="HOGENOM" id="CLU_024251_2_3_3"/>
<dbReference type="OrthoDB" id="9809429at2"/>
<dbReference type="UniPathway" id="UPA00109">
    <property type="reaction ID" value="UER00189"/>
</dbReference>
<dbReference type="UniPathway" id="UPA00138"/>
<dbReference type="Proteomes" id="UP000000268">
    <property type="component" value="Chromosome"/>
</dbReference>
<dbReference type="GO" id="GO:0005829">
    <property type="term" value="C:cytosol"/>
    <property type="evidence" value="ECO:0007669"/>
    <property type="project" value="TreeGrafter"/>
</dbReference>
<dbReference type="GO" id="GO:0004807">
    <property type="term" value="F:triose-phosphate isomerase activity"/>
    <property type="evidence" value="ECO:0007669"/>
    <property type="project" value="UniProtKB-UniRule"/>
</dbReference>
<dbReference type="GO" id="GO:0006094">
    <property type="term" value="P:gluconeogenesis"/>
    <property type="evidence" value="ECO:0007669"/>
    <property type="project" value="UniProtKB-UniRule"/>
</dbReference>
<dbReference type="GO" id="GO:0046166">
    <property type="term" value="P:glyceraldehyde-3-phosphate biosynthetic process"/>
    <property type="evidence" value="ECO:0007669"/>
    <property type="project" value="TreeGrafter"/>
</dbReference>
<dbReference type="GO" id="GO:0019563">
    <property type="term" value="P:glycerol catabolic process"/>
    <property type="evidence" value="ECO:0007669"/>
    <property type="project" value="TreeGrafter"/>
</dbReference>
<dbReference type="GO" id="GO:0006096">
    <property type="term" value="P:glycolytic process"/>
    <property type="evidence" value="ECO:0007669"/>
    <property type="project" value="UniProtKB-UniRule"/>
</dbReference>
<dbReference type="CDD" id="cd00311">
    <property type="entry name" value="TIM"/>
    <property type="match status" value="1"/>
</dbReference>
<dbReference type="FunFam" id="3.20.20.70:FF:000016">
    <property type="entry name" value="Triosephosphate isomerase"/>
    <property type="match status" value="1"/>
</dbReference>
<dbReference type="Gene3D" id="3.20.20.70">
    <property type="entry name" value="Aldolase class I"/>
    <property type="match status" value="1"/>
</dbReference>
<dbReference type="HAMAP" id="MF_00147_B">
    <property type="entry name" value="TIM_B"/>
    <property type="match status" value="1"/>
</dbReference>
<dbReference type="InterPro" id="IPR013785">
    <property type="entry name" value="Aldolase_TIM"/>
</dbReference>
<dbReference type="InterPro" id="IPR035990">
    <property type="entry name" value="TIM_sf"/>
</dbReference>
<dbReference type="InterPro" id="IPR022896">
    <property type="entry name" value="TrioseP_Isoase_bac/euk"/>
</dbReference>
<dbReference type="InterPro" id="IPR000652">
    <property type="entry name" value="Triosephosphate_isomerase"/>
</dbReference>
<dbReference type="InterPro" id="IPR020861">
    <property type="entry name" value="Triosephosphate_isomerase_AS"/>
</dbReference>
<dbReference type="NCBIfam" id="TIGR00419">
    <property type="entry name" value="tim"/>
    <property type="match status" value="1"/>
</dbReference>
<dbReference type="PANTHER" id="PTHR21139">
    <property type="entry name" value="TRIOSEPHOSPHATE ISOMERASE"/>
    <property type="match status" value="1"/>
</dbReference>
<dbReference type="PANTHER" id="PTHR21139:SF42">
    <property type="entry name" value="TRIOSEPHOSPHATE ISOMERASE"/>
    <property type="match status" value="1"/>
</dbReference>
<dbReference type="Pfam" id="PF00121">
    <property type="entry name" value="TIM"/>
    <property type="match status" value="1"/>
</dbReference>
<dbReference type="SUPFAM" id="SSF51351">
    <property type="entry name" value="Triosephosphate isomerase (TIM)"/>
    <property type="match status" value="1"/>
</dbReference>
<dbReference type="PROSITE" id="PS00171">
    <property type="entry name" value="TIM_1"/>
    <property type="match status" value="1"/>
</dbReference>
<dbReference type="PROSITE" id="PS51440">
    <property type="entry name" value="TIM_2"/>
    <property type="match status" value="1"/>
</dbReference>
<accession>B0CEX1</accession>
<gene>
    <name evidence="1" type="primary">tpiA</name>
    <name type="ordered locus">AM1_4389</name>
</gene>
<reference key="1">
    <citation type="journal article" date="2008" name="Proc. Natl. Acad. Sci. U.S.A.">
        <title>Niche adaptation and genome expansion in the chlorophyll d-producing cyanobacterium Acaryochloris marina.</title>
        <authorList>
            <person name="Swingley W.D."/>
            <person name="Chen M."/>
            <person name="Cheung P.C."/>
            <person name="Conrad A.L."/>
            <person name="Dejesa L.C."/>
            <person name="Hao J."/>
            <person name="Honchak B.M."/>
            <person name="Karbach L.E."/>
            <person name="Kurdoglu A."/>
            <person name="Lahiri S."/>
            <person name="Mastrian S.D."/>
            <person name="Miyashita H."/>
            <person name="Page L."/>
            <person name="Ramakrishna P."/>
            <person name="Satoh S."/>
            <person name="Sattley W.M."/>
            <person name="Shimada Y."/>
            <person name="Taylor H.L."/>
            <person name="Tomo T."/>
            <person name="Tsuchiya T."/>
            <person name="Wang Z.T."/>
            <person name="Raymond J."/>
            <person name="Mimuro M."/>
            <person name="Blankenship R.E."/>
            <person name="Touchman J.W."/>
        </authorList>
    </citation>
    <scope>NUCLEOTIDE SEQUENCE [LARGE SCALE GENOMIC DNA]</scope>
    <source>
        <strain>MBIC 11017</strain>
    </source>
</reference>
<organism>
    <name type="scientific">Acaryochloris marina (strain MBIC 11017)</name>
    <dbReference type="NCBI Taxonomy" id="329726"/>
    <lineage>
        <taxon>Bacteria</taxon>
        <taxon>Bacillati</taxon>
        <taxon>Cyanobacteriota</taxon>
        <taxon>Cyanophyceae</taxon>
        <taxon>Acaryochloridales</taxon>
        <taxon>Acaryochloridaceae</taxon>
        <taxon>Acaryochloris</taxon>
    </lineage>
</organism>
<protein>
    <recommendedName>
        <fullName evidence="1">Triosephosphate isomerase</fullName>
        <shortName evidence="1">TIM</shortName>
        <shortName evidence="1">TPI</shortName>
        <ecNumber evidence="1">5.3.1.1</ecNumber>
    </recommendedName>
    <alternativeName>
        <fullName evidence="1">Triose-phosphate isomerase</fullName>
    </alternativeName>
</protein>
<name>TPIS_ACAM1</name>
<proteinExistence type="inferred from homology"/>
<keyword id="KW-0963">Cytoplasm</keyword>
<keyword id="KW-0312">Gluconeogenesis</keyword>
<keyword id="KW-0324">Glycolysis</keyword>
<keyword id="KW-0413">Isomerase</keyword>
<keyword id="KW-1185">Reference proteome</keyword>
<evidence type="ECO:0000255" key="1">
    <source>
        <dbReference type="HAMAP-Rule" id="MF_00147"/>
    </source>
</evidence>
<feature type="chain" id="PRO_1000076632" description="Triosephosphate isomerase">
    <location>
        <begin position="1"/>
        <end position="241"/>
    </location>
</feature>
<feature type="active site" description="Electrophile" evidence="1">
    <location>
        <position position="96"/>
    </location>
</feature>
<feature type="active site" description="Proton acceptor" evidence="1">
    <location>
        <position position="165"/>
    </location>
</feature>
<feature type="binding site" evidence="1">
    <location>
        <begin position="9"/>
        <end position="11"/>
    </location>
    <ligand>
        <name>substrate</name>
    </ligand>
</feature>
<feature type="binding site" evidence="1">
    <location>
        <position position="171"/>
    </location>
    <ligand>
        <name>substrate</name>
    </ligand>
</feature>
<feature type="binding site" evidence="1">
    <location>
        <position position="204"/>
    </location>
    <ligand>
        <name>substrate</name>
    </ligand>
</feature>
<feature type="binding site" evidence="1">
    <location>
        <begin position="225"/>
        <end position="226"/>
    </location>
    <ligand>
        <name>substrate</name>
    </ligand>
</feature>
<sequence>MRKIAIAGNWKMHKTQAEALEFLQTFLPLLQDTPEDRDVILCAPFTTLTALSKNLHGSRVQVGAQNIHWEDTGAFTGEISGPMLLETGVRYVVVGHSERRQFFGETDATVNQRLKAAQNHRLTPILCVGESKAQRDANETETVIFEQLEKGLVGVDQKNLIIAYEPIWAIGTGDTCASSEANRVIGLIRSRLTNHDVTIQYGGSVKPDNVDEIMAQPEIDGALVGGASLAGDGFARVVNYQ</sequence>